<reference key="1">
    <citation type="journal article" date="2013" name="Proc. Natl. Acad. Sci. U.S.A.">
        <title>Polynucleobacter necessarius, a model for genome reduction in both free-living and symbiotic bacteria.</title>
        <authorList>
            <person name="Boscaro V."/>
            <person name="Felletti M."/>
            <person name="Vannini C."/>
            <person name="Ackerman M.S."/>
            <person name="Chain P.S."/>
            <person name="Malfatti S."/>
            <person name="Vergez L.M."/>
            <person name="Shin M."/>
            <person name="Doak T.G."/>
            <person name="Lynch M."/>
            <person name="Petroni G."/>
        </authorList>
    </citation>
    <scope>NUCLEOTIDE SEQUENCE [LARGE SCALE GENOMIC DNA]</scope>
    <source>
        <strain>STIR1</strain>
    </source>
</reference>
<dbReference type="EMBL" id="CP001010">
    <property type="protein sequence ID" value="ACB43353.1"/>
    <property type="molecule type" value="Genomic_DNA"/>
</dbReference>
<dbReference type="SMR" id="B1XSD5"/>
<dbReference type="STRING" id="452638.Pnec_0023"/>
<dbReference type="KEGG" id="pne:Pnec_0023"/>
<dbReference type="eggNOG" id="COG0355">
    <property type="taxonomic scope" value="Bacteria"/>
</dbReference>
<dbReference type="HOGENOM" id="CLU_084338_2_0_4"/>
<dbReference type="OrthoDB" id="9791445at2"/>
<dbReference type="GO" id="GO:0005886">
    <property type="term" value="C:plasma membrane"/>
    <property type="evidence" value="ECO:0007669"/>
    <property type="project" value="UniProtKB-SubCell"/>
</dbReference>
<dbReference type="GO" id="GO:0045259">
    <property type="term" value="C:proton-transporting ATP synthase complex"/>
    <property type="evidence" value="ECO:0007669"/>
    <property type="project" value="UniProtKB-KW"/>
</dbReference>
<dbReference type="GO" id="GO:0005524">
    <property type="term" value="F:ATP binding"/>
    <property type="evidence" value="ECO:0007669"/>
    <property type="project" value="UniProtKB-UniRule"/>
</dbReference>
<dbReference type="GO" id="GO:0046933">
    <property type="term" value="F:proton-transporting ATP synthase activity, rotational mechanism"/>
    <property type="evidence" value="ECO:0007669"/>
    <property type="project" value="UniProtKB-UniRule"/>
</dbReference>
<dbReference type="CDD" id="cd12152">
    <property type="entry name" value="F1-ATPase_delta"/>
    <property type="match status" value="1"/>
</dbReference>
<dbReference type="FunFam" id="2.60.15.10:FF:000001">
    <property type="entry name" value="ATP synthase epsilon chain"/>
    <property type="match status" value="1"/>
</dbReference>
<dbReference type="Gene3D" id="1.20.5.440">
    <property type="entry name" value="ATP synthase delta/epsilon subunit, C-terminal domain"/>
    <property type="match status" value="1"/>
</dbReference>
<dbReference type="Gene3D" id="2.60.15.10">
    <property type="entry name" value="F0F1 ATP synthase delta/epsilon subunit, N-terminal"/>
    <property type="match status" value="1"/>
</dbReference>
<dbReference type="HAMAP" id="MF_00530">
    <property type="entry name" value="ATP_synth_epsil_bac"/>
    <property type="match status" value="1"/>
</dbReference>
<dbReference type="InterPro" id="IPR036794">
    <property type="entry name" value="ATP_F1_dsu/esu_C_sf"/>
</dbReference>
<dbReference type="InterPro" id="IPR001469">
    <property type="entry name" value="ATP_synth_F1_dsu/esu"/>
</dbReference>
<dbReference type="InterPro" id="IPR020546">
    <property type="entry name" value="ATP_synth_F1_dsu/esu_N"/>
</dbReference>
<dbReference type="InterPro" id="IPR020547">
    <property type="entry name" value="ATP_synth_F1_esu_C"/>
</dbReference>
<dbReference type="InterPro" id="IPR036771">
    <property type="entry name" value="ATPsynth_dsu/esu_N"/>
</dbReference>
<dbReference type="NCBIfam" id="TIGR01216">
    <property type="entry name" value="ATP_synt_epsi"/>
    <property type="match status" value="1"/>
</dbReference>
<dbReference type="NCBIfam" id="NF001847">
    <property type="entry name" value="PRK00571.1-4"/>
    <property type="match status" value="1"/>
</dbReference>
<dbReference type="PANTHER" id="PTHR13822">
    <property type="entry name" value="ATP SYNTHASE DELTA/EPSILON CHAIN"/>
    <property type="match status" value="1"/>
</dbReference>
<dbReference type="PANTHER" id="PTHR13822:SF10">
    <property type="entry name" value="ATP SYNTHASE EPSILON CHAIN, CHLOROPLASTIC"/>
    <property type="match status" value="1"/>
</dbReference>
<dbReference type="Pfam" id="PF00401">
    <property type="entry name" value="ATP-synt_DE"/>
    <property type="match status" value="1"/>
</dbReference>
<dbReference type="Pfam" id="PF02823">
    <property type="entry name" value="ATP-synt_DE_N"/>
    <property type="match status" value="1"/>
</dbReference>
<dbReference type="SUPFAM" id="SSF46604">
    <property type="entry name" value="Epsilon subunit of F1F0-ATP synthase C-terminal domain"/>
    <property type="match status" value="1"/>
</dbReference>
<dbReference type="SUPFAM" id="SSF51344">
    <property type="entry name" value="Epsilon subunit of F1F0-ATP synthase N-terminal domain"/>
    <property type="match status" value="1"/>
</dbReference>
<comment type="function">
    <text evidence="1">Produces ATP from ADP in the presence of a proton gradient across the membrane.</text>
</comment>
<comment type="subunit">
    <text evidence="1">F-type ATPases have 2 components, CF(1) - the catalytic core - and CF(0) - the membrane proton channel. CF(1) has five subunits: alpha(3), beta(3), gamma(1), delta(1), epsilon(1). CF(0) has three main subunits: a, b and c.</text>
</comment>
<comment type="subcellular location">
    <subcellularLocation>
        <location evidence="1">Cell inner membrane</location>
        <topology evidence="1">Peripheral membrane protein</topology>
    </subcellularLocation>
</comment>
<comment type="similarity">
    <text evidence="1">Belongs to the ATPase epsilon chain family.</text>
</comment>
<feature type="chain" id="PRO_1000127876" description="ATP synthase epsilon chain">
    <location>
        <begin position="1"/>
        <end position="138"/>
    </location>
</feature>
<sequence>MSTIRVDVVSTEQSIFSVEAKFVALPGESGELGILRGHTPLITRIRPGSVRIEKADDDEEFVFVAGGYLEIQSDHVTVLADTAIRGHDLDEAKAIEAKKRAEEAMQNRGTDFDLALAQSEFAMAAAQLAAIARFRRKK</sequence>
<accession>B1XSD5</accession>
<name>ATPE_POLNS</name>
<proteinExistence type="inferred from homology"/>
<organism>
    <name type="scientific">Polynucleobacter necessarius subsp. necessarius (strain STIR1)</name>
    <dbReference type="NCBI Taxonomy" id="452638"/>
    <lineage>
        <taxon>Bacteria</taxon>
        <taxon>Pseudomonadati</taxon>
        <taxon>Pseudomonadota</taxon>
        <taxon>Betaproteobacteria</taxon>
        <taxon>Burkholderiales</taxon>
        <taxon>Burkholderiaceae</taxon>
        <taxon>Polynucleobacter</taxon>
    </lineage>
</organism>
<gene>
    <name evidence="1" type="primary">atpC</name>
    <name type="ordered locus">Pnec_0023</name>
</gene>
<protein>
    <recommendedName>
        <fullName evidence="1">ATP synthase epsilon chain</fullName>
    </recommendedName>
    <alternativeName>
        <fullName evidence="1">ATP synthase F1 sector epsilon subunit</fullName>
    </alternativeName>
    <alternativeName>
        <fullName evidence="1">F-ATPase epsilon subunit</fullName>
    </alternativeName>
</protein>
<keyword id="KW-0066">ATP synthesis</keyword>
<keyword id="KW-0997">Cell inner membrane</keyword>
<keyword id="KW-1003">Cell membrane</keyword>
<keyword id="KW-0139">CF(1)</keyword>
<keyword id="KW-0375">Hydrogen ion transport</keyword>
<keyword id="KW-0406">Ion transport</keyword>
<keyword id="KW-0472">Membrane</keyword>
<keyword id="KW-0813">Transport</keyword>
<evidence type="ECO:0000255" key="1">
    <source>
        <dbReference type="HAMAP-Rule" id="MF_00530"/>
    </source>
</evidence>